<name>ISPE_MACCJ</name>
<feature type="chain" id="PRO_1000190691" description="4-diphosphocytidyl-2-C-methyl-D-erythritol kinase">
    <location>
        <begin position="1"/>
        <end position="283"/>
    </location>
</feature>
<feature type="active site" evidence="1">
    <location>
        <position position="9"/>
    </location>
</feature>
<feature type="active site" evidence="1">
    <location>
        <position position="135"/>
    </location>
</feature>
<feature type="binding site" evidence="1">
    <location>
        <begin position="93"/>
        <end position="103"/>
    </location>
    <ligand>
        <name>ATP</name>
        <dbReference type="ChEBI" id="CHEBI:30616"/>
    </ligand>
</feature>
<reference key="1">
    <citation type="journal article" date="2009" name="J. Bacteriol.">
        <title>Complete genome sequence of Macrococcus caseolyticus strain JCSCS5402, reflecting the ancestral genome of the human-pathogenic staphylococci.</title>
        <authorList>
            <person name="Baba T."/>
            <person name="Kuwahara-Arai K."/>
            <person name="Uchiyama I."/>
            <person name="Takeuchi F."/>
            <person name="Ito T."/>
            <person name="Hiramatsu K."/>
        </authorList>
    </citation>
    <scope>NUCLEOTIDE SEQUENCE [LARGE SCALE GENOMIC DNA]</scope>
    <source>
        <strain>JCSC5402</strain>
    </source>
</reference>
<keyword id="KW-0067">ATP-binding</keyword>
<keyword id="KW-0414">Isoprene biosynthesis</keyword>
<keyword id="KW-0418">Kinase</keyword>
<keyword id="KW-0547">Nucleotide-binding</keyword>
<keyword id="KW-1185">Reference proteome</keyword>
<keyword id="KW-0808">Transferase</keyword>
<dbReference type="EC" id="2.7.1.148" evidence="1"/>
<dbReference type="EMBL" id="AP009484">
    <property type="protein sequence ID" value="BAH18625.1"/>
    <property type="molecule type" value="Genomic_DNA"/>
</dbReference>
<dbReference type="RefSeq" id="WP_015912417.1">
    <property type="nucleotide sequence ID" value="NC_011999.1"/>
</dbReference>
<dbReference type="SMR" id="B9E8V7"/>
<dbReference type="STRING" id="458233.MCCL_1918"/>
<dbReference type="KEGG" id="mcl:MCCL_1918"/>
<dbReference type="eggNOG" id="COG1947">
    <property type="taxonomic scope" value="Bacteria"/>
</dbReference>
<dbReference type="HOGENOM" id="CLU_053057_1_1_9"/>
<dbReference type="OrthoDB" id="9809438at2"/>
<dbReference type="UniPathway" id="UPA00056">
    <property type="reaction ID" value="UER00094"/>
</dbReference>
<dbReference type="Proteomes" id="UP000001383">
    <property type="component" value="Chromosome"/>
</dbReference>
<dbReference type="GO" id="GO:0050515">
    <property type="term" value="F:4-(cytidine 5'-diphospho)-2-C-methyl-D-erythritol kinase activity"/>
    <property type="evidence" value="ECO:0007669"/>
    <property type="project" value="UniProtKB-UniRule"/>
</dbReference>
<dbReference type="GO" id="GO:0005524">
    <property type="term" value="F:ATP binding"/>
    <property type="evidence" value="ECO:0007669"/>
    <property type="project" value="UniProtKB-UniRule"/>
</dbReference>
<dbReference type="GO" id="GO:0019288">
    <property type="term" value="P:isopentenyl diphosphate biosynthetic process, methylerythritol 4-phosphate pathway"/>
    <property type="evidence" value="ECO:0007669"/>
    <property type="project" value="UniProtKB-UniRule"/>
</dbReference>
<dbReference type="GO" id="GO:0016114">
    <property type="term" value="P:terpenoid biosynthetic process"/>
    <property type="evidence" value="ECO:0007669"/>
    <property type="project" value="InterPro"/>
</dbReference>
<dbReference type="FunFam" id="3.30.230.10:FF:000029">
    <property type="entry name" value="4-diphosphocytidyl-2-C-methyl-D-erythritol kinase"/>
    <property type="match status" value="1"/>
</dbReference>
<dbReference type="FunFam" id="3.30.70.890:FF:000006">
    <property type="entry name" value="4-diphosphocytidyl-2-C-methyl-D-erythritol kinase"/>
    <property type="match status" value="1"/>
</dbReference>
<dbReference type="Gene3D" id="3.30.230.10">
    <property type="match status" value="1"/>
</dbReference>
<dbReference type="Gene3D" id="3.30.70.890">
    <property type="entry name" value="GHMP kinase, C-terminal domain"/>
    <property type="match status" value="1"/>
</dbReference>
<dbReference type="HAMAP" id="MF_00061">
    <property type="entry name" value="IspE"/>
    <property type="match status" value="1"/>
</dbReference>
<dbReference type="InterPro" id="IPR013750">
    <property type="entry name" value="GHMP_kinase_C_dom"/>
</dbReference>
<dbReference type="InterPro" id="IPR036554">
    <property type="entry name" value="GHMP_kinase_C_sf"/>
</dbReference>
<dbReference type="InterPro" id="IPR006204">
    <property type="entry name" value="GHMP_kinase_N_dom"/>
</dbReference>
<dbReference type="InterPro" id="IPR004424">
    <property type="entry name" value="IspE"/>
</dbReference>
<dbReference type="InterPro" id="IPR020568">
    <property type="entry name" value="Ribosomal_Su5_D2-typ_SF"/>
</dbReference>
<dbReference type="InterPro" id="IPR014721">
    <property type="entry name" value="Ribsml_uS5_D2-typ_fold_subgr"/>
</dbReference>
<dbReference type="NCBIfam" id="TIGR00154">
    <property type="entry name" value="ispE"/>
    <property type="match status" value="1"/>
</dbReference>
<dbReference type="NCBIfam" id="NF011202">
    <property type="entry name" value="PRK14608.1"/>
    <property type="match status" value="1"/>
</dbReference>
<dbReference type="PANTHER" id="PTHR43527">
    <property type="entry name" value="4-DIPHOSPHOCYTIDYL-2-C-METHYL-D-ERYTHRITOL KINASE, CHLOROPLASTIC"/>
    <property type="match status" value="1"/>
</dbReference>
<dbReference type="PANTHER" id="PTHR43527:SF2">
    <property type="entry name" value="4-DIPHOSPHOCYTIDYL-2-C-METHYL-D-ERYTHRITOL KINASE, CHLOROPLASTIC"/>
    <property type="match status" value="1"/>
</dbReference>
<dbReference type="Pfam" id="PF08544">
    <property type="entry name" value="GHMP_kinases_C"/>
    <property type="match status" value="1"/>
</dbReference>
<dbReference type="Pfam" id="PF00288">
    <property type="entry name" value="GHMP_kinases_N"/>
    <property type="match status" value="1"/>
</dbReference>
<dbReference type="PIRSF" id="PIRSF010376">
    <property type="entry name" value="IspE"/>
    <property type="match status" value="1"/>
</dbReference>
<dbReference type="SUPFAM" id="SSF55060">
    <property type="entry name" value="GHMP Kinase, C-terminal domain"/>
    <property type="match status" value="1"/>
</dbReference>
<dbReference type="SUPFAM" id="SSF54211">
    <property type="entry name" value="Ribosomal protein S5 domain 2-like"/>
    <property type="match status" value="1"/>
</dbReference>
<sequence length="283" mass="31570">MIYENAPAKINLTLDTLYKRDDGYHEVEMIMTTVDLYDRLTLEKRKDKKIVLKIEHRYVPNDHRNLAYKAAELMIERYNIKCGVTITLDKTIPIAAGLAGGSSDAAATFRGMNKLFELNLSLKTLAELSSEIGSDIPFCIYGRTSLCTGRGEVLEHLPKPPSCWVILAKPEISVSTQEVYSALDLSQAHEQIENEKCRRAIEAGDYLEMIRTLGNRLETVTIEMHPVIQMLKETMMKAGADVAMMSGSGPTVYGLAAKERQAKSVVNALKGCCKEVYMVRMLG</sequence>
<proteinExistence type="inferred from homology"/>
<comment type="function">
    <text evidence="1">Catalyzes the phosphorylation of the position 2 hydroxy group of 4-diphosphocytidyl-2C-methyl-D-erythritol.</text>
</comment>
<comment type="catalytic activity">
    <reaction evidence="1">
        <text>4-CDP-2-C-methyl-D-erythritol + ATP = 4-CDP-2-C-methyl-D-erythritol 2-phosphate + ADP + H(+)</text>
        <dbReference type="Rhea" id="RHEA:18437"/>
        <dbReference type="ChEBI" id="CHEBI:15378"/>
        <dbReference type="ChEBI" id="CHEBI:30616"/>
        <dbReference type="ChEBI" id="CHEBI:57823"/>
        <dbReference type="ChEBI" id="CHEBI:57919"/>
        <dbReference type="ChEBI" id="CHEBI:456216"/>
        <dbReference type="EC" id="2.7.1.148"/>
    </reaction>
</comment>
<comment type="pathway">
    <text evidence="1">Isoprenoid biosynthesis; isopentenyl diphosphate biosynthesis via DXP pathway; isopentenyl diphosphate from 1-deoxy-D-xylulose 5-phosphate: step 3/6.</text>
</comment>
<comment type="similarity">
    <text evidence="1">Belongs to the GHMP kinase family. IspE subfamily.</text>
</comment>
<gene>
    <name evidence="1" type="primary">ispE</name>
    <name type="ordered locus">MCCL_1918</name>
</gene>
<evidence type="ECO:0000255" key="1">
    <source>
        <dbReference type="HAMAP-Rule" id="MF_00061"/>
    </source>
</evidence>
<organism>
    <name type="scientific">Macrococcus caseolyticus (strain JCSC5402)</name>
    <name type="common">Macrococcoides caseolyticum</name>
    <dbReference type="NCBI Taxonomy" id="458233"/>
    <lineage>
        <taxon>Bacteria</taxon>
        <taxon>Bacillati</taxon>
        <taxon>Bacillota</taxon>
        <taxon>Bacilli</taxon>
        <taxon>Bacillales</taxon>
        <taxon>Staphylococcaceae</taxon>
        <taxon>Macrococcoides</taxon>
    </lineage>
</organism>
<protein>
    <recommendedName>
        <fullName evidence="1">4-diphosphocytidyl-2-C-methyl-D-erythritol kinase</fullName>
        <shortName evidence="1">CMK</shortName>
        <ecNumber evidence="1">2.7.1.148</ecNumber>
    </recommendedName>
    <alternativeName>
        <fullName evidence="1">4-(cytidine-5'-diphospho)-2-C-methyl-D-erythritol kinase</fullName>
    </alternativeName>
</protein>
<accession>B9E8V7</accession>